<protein>
    <recommendedName>
        <fullName evidence="6">Lipase 9</fullName>
        <ecNumber evidence="1">3.1.1.3</ecNumber>
    </recommendedName>
</protein>
<accession>Q9P4E6</accession>
<accession>A0A1D8PR77</accession>
<accession>Q5A5A8</accession>
<feature type="signal peptide" evidence="3">
    <location>
        <begin position="1"/>
        <end position="14"/>
    </location>
</feature>
<feature type="chain" id="PRO_0000017828" description="Lipase 9">
    <location>
        <begin position="15"/>
        <end position="453"/>
    </location>
</feature>
<feature type="active site" description="Charge relay system" evidence="2">
    <location>
        <position position="194"/>
    </location>
</feature>
<feature type="active site" description="Charge relay system" evidence="2">
    <location>
        <position position="343"/>
    </location>
</feature>
<feature type="active site" description="Charge relay system" evidence="2">
    <location>
        <position position="376"/>
    </location>
</feature>
<feature type="glycosylation site" description="N-linked (GlcNAc...) asparagine" evidence="3">
    <location>
        <position position="36"/>
    </location>
</feature>
<feature type="glycosylation site" description="N-linked (GlcNAc...) asparagine" evidence="3">
    <location>
        <position position="229"/>
    </location>
</feature>
<feature type="glycosylation site" description="N-linked (GlcNAc...) asparagine" evidence="3">
    <location>
        <position position="266"/>
    </location>
</feature>
<feature type="glycosylation site" description="N-linked (GlcNAc...) asparagine" evidence="3">
    <location>
        <position position="269"/>
    </location>
</feature>
<feature type="glycosylation site" description="N-linked (GlcNAc...) asparagine" evidence="3">
    <location>
        <position position="417"/>
    </location>
</feature>
<feature type="disulfide bond" evidence="2">
    <location>
        <begin position="110"/>
        <end position="281"/>
    </location>
</feature>
<feature type="disulfide bond" evidence="2">
    <location>
        <begin position="359"/>
        <end position="404"/>
    </location>
</feature>
<feature type="sequence conflict" description="In Ref. 1; AAF79929." evidence="7" ref="1">
    <original>I</original>
    <variation>T</variation>
    <location>
        <position position="245"/>
    </location>
</feature>
<organism>
    <name type="scientific">Candida albicans (strain SC5314 / ATCC MYA-2876)</name>
    <name type="common">Yeast</name>
    <dbReference type="NCBI Taxonomy" id="237561"/>
    <lineage>
        <taxon>Eukaryota</taxon>
        <taxon>Fungi</taxon>
        <taxon>Dikarya</taxon>
        <taxon>Ascomycota</taxon>
        <taxon>Saccharomycotina</taxon>
        <taxon>Pichiomycetes</taxon>
        <taxon>Debaryomycetaceae</taxon>
        <taxon>Candida/Lodderomyces clade</taxon>
        <taxon>Candida</taxon>
    </lineage>
</organism>
<evidence type="ECO:0000250" key="1">
    <source>
        <dbReference type="UniProtKB" id="O94091"/>
    </source>
</evidence>
<evidence type="ECO:0000250" key="2">
    <source>
        <dbReference type="UniProtKB" id="W3VKA4"/>
    </source>
</evidence>
<evidence type="ECO:0000255" key="3"/>
<evidence type="ECO:0000269" key="4">
    <source>
    </source>
</evidence>
<evidence type="ECO:0000269" key="5">
    <source>
    </source>
</evidence>
<evidence type="ECO:0000303" key="6">
    <source>
    </source>
</evidence>
<evidence type="ECO:0000305" key="7"/>
<evidence type="ECO:0000305" key="8">
    <source>
    </source>
</evidence>
<dbReference type="EC" id="3.1.1.3" evidence="1"/>
<dbReference type="EMBL" id="AF191322">
    <property type="protein sequence ID" value="AAF79929.1"/>
    <property type="molecule type" value="Genomic_DNA"/>
</dbReference>
<dbReference type="EMBL" id="CP017629">
    <property type="protein sequence ID" value="AOW30635.1"/>
    <property type="molecule type" value="Genomic_DNA"/>
</dbReference>
<dbReference type="RefSeq" id="XP_716995.2">
    <property type="nucleotide sequence ID" value="XM_711902.2"/>
</dbReference>
<dbReference type="SMR" id="Q9P4E6"/>
<dbReference type="STRING" id="237561.Q9P4E6"/>
<dbReference type="ESTHER" id="canal-LIP9">
    <property type="family name" value="Fungal-Bact_LIP"/>
</dbReference>
<dbReference type="GlyCosmos" id="Q9P4E6">
    <property type="glycosylation" value="5 sites, No reported glycans"/>
</dbReference>
<dbReference type="PeptideAtlas" id="Q9P4E6"/>
<dbReference type="EnsemblFungi" id="C7_02880C_A-T">
    <property type="protein sequence ID" value="C7_02880C_A-T-p1"/>
    <property type="gene ID" value="C7_02880C_A"/>
</dbReference>
<dbReference type="GeneID" id="3641395"/>
<dbReference type="KEGG" id="cal:CAALFM_C702880CA"/>
<dbReference type="CGD" id="CAL0000191620">
    <property type="gene designation" value="LIP9"/>
</dbReference>
<dbReference type="VEuPathDB" id="FungiDB:C7_02880C_A"/>
<dbReference type="eggNOG" id="ENOG502SI7U">
    <property type="taxonomic scope" value="Eukaryota"/>
</dbReference>
<dbReference type="HOGENOM" id="CLU_122001_0_0_1"/>
<dbReference type="InParanoid" id="Q9P4E6"/>
<dbReference type="OrthoDB" id="2373480at2759"/>
<dbReference type="Proteomes" id="UP000000559">
    <property type="component" value="Chromosome 7"/>
</dbReference>
<dbReference type="GO" id="GO:0005576">
    <property type="term" value="C:extracellular region"/>
    <property type="evidence" value="ECO:0007669"/>
    <property type="project" value="UniProtKB-SubCell"/>
</dbReference>
<dbReference type="GO" id="GO:0004806">
    <property type="term" value="F:triacylglycerol lipase activity"/>
    <property type="evidence" value="ECO:0007669"/>
    <property type="project" value="UniProtKB-EC"/>
</dbReference>
<dbReference type="GO" id="GO:0016042">
    <property type="term" value="P:lipid catabolic process"/>
    <property type="evidence" value="ECO:0007669"/>
    <property type="project" value="UniProtKB-KW"/>
</dbReference>
<dbReference type="Gene3D" id="1.10.260.130">
    <property type="match status" value="1"/>
</dbReference>
<dbReference type="Gene3D" id="3.40.50.1820">
    <property type="entry name" value="alpha/beta hydrolase"/>
    <property type="match status" value="1"/>
</dbReference>
<dbReference type="InterPro" id="IPR029058">
    <property type="entry name" value="AB_hydrolase_fold"/>
</dbReference>
<dbReference type="InterPro" id="IPR005152">
    <property type="entry name" value="Lipase_secreted"/>
</dbReference>
<dbReference type="PANTHER" id="PTHR34853">
    <property type="match status" value="1"/>
</dbReference>
<dbReference type="PANTHER" id="PTHR34853:SF1">
    <property type="entry name" value="LIPASE 5"/>
    <property type="match status" value="1"/>
</dbReference>
<dbReference type="Pfam" id="PF03583">
    <property type="entry name" value="LIP"/>
    <property type="match status" value="1"/>
</dbReference>
<dbReference type="PIRSF" id="PIRSF029171">
    <property type="entry name" value="Esterase_LipA"/>
    <property type="match status" value="1"/>
</dbReference>
<dbReference type="SUPFAM" id="SSF53474">
    <property type="entry name" value="alpha/beta-Hydrolases"/>
    <property type="match status" value="1"/>
</dbReference>
<reference key="1">
    <citation type="journal article" date="2000" name="Arch. Microbiol.">
        <title>Secreted lipases of Candida albicans: cloning, characterisation and expression analysis of a new gene family with at least ten members.</title>
        <authorList>
            <person name="Hube B."/>
            <person name="Stehr F."/>
            <person name="Bossenz M."/>
            <person name="Mazur A."/>
            <person name="Kretschmar M."/>
            <person name="Schaefer W."/>
        </authorList>
    </citation>
    <scope>NUCLEOTIDE SEQUENCE [GENOMIC DNA]</scope>
    <scope>SUBCELLULAR LOCATION</scope>
    <scope>FUNCTION</scope>
    <scope>INDUCTION</scope>
    <source>
        <strain>SC5314 / ATCC MYA-2876</strain>
    </source>
</reference>
<reference key="2">
    <citation type="journal article" date="2004" name="Proc. Natl. Acad. Sci. U.S.A.">
        <title>The diploid genome sequence of Candida albicans.</title>
        <authorList>
            <person name="Jones T."/>
            <person name="Federspiel N.A."/>
            <person name="Chibana H."/>
            <person name="Dungan J."/>
            <person name="Kalman S."/>
            <person name="Magee B.B."/>
            <person name="Newport G."/>
            <person name="Thorstenson Y.R."/>
            <person name="Agabian N."/>
            <person name="Magee P.T."/>
            <person name="Davis R.W."/>
            <person name="Scherer S."/>
        </authorList>
    </citation>
    <scope>NUCLEOTIDE SEQUENCE [LARGE SCALE GENOMIC DNA]</scope>
    <source>
        <strain>SC5314 / ATCC MYA-2876</strain>
    </source>
</reference>
<reference key="3">
    <citation type="journal article" date="2007" name="Genome Biol.">
        <title>Assembly of the Candida albicans genome into sixteen supercontigs aligned on the eight chromosomes.</title>
        <authorList>
            <person name="van het Hoog M."/>
            <person name="Rast T.J."/>
            <person name="Martchenko M."/>
            <person name="Grindle S."/>
            <person name="Dignard D."/>
            <person name="Hogues H."/>
            <person name="Cuomo C."/>
            <person name="Berriman M."/>
            <person name="Scherer S."/>
            <person name="Magee B.B."/>
            <person name="Whiteway M."/>
            <person name="Chibana H."/>
            <person name="Nantel A."/>
            <person name="Magee P.T."/>
        </authorList>
    </citation>
    <scope>GENOME REANNOTATION</scope>
    <source>
        <strain>SC5314 / ATCC MYA-2876</strain>
    </source>
</reference>
<reference key="4">
    <citation type="journal article" date="2013" name="Genome Biol.">
        <title>Assembly of a phased diploid Candida albicans genome facilitates allele-specific measurements and provides a simple model for repeat and indel structure.</title>
        <authorList>
            <person name="Muzzey D."/>
            <person name="Schwartz K."/>
            <person name="Weissman J.S."/>
            <person name="Sherlock G."/>
        </authorList>
    </citation>
    <scope>NUCLEOTIDE SEQUENCE [LARGE SCALE GENOMIC DNA]</scope>
    <scope>GENOME REANNOTATION</scope>
    <source>
        <strain>SC5314 / ATCC MYA-2876</strain>
    </source>
</reference>
<reference key="5">
    <citation type="journal article" date="2004" name="FEMS Yeast Res.">
        <title>Expression analysis of the Candida albicans lipase gene family during experimental infections and in patient samples.</title>
        <authorList>
            <person name="Stehr F."/>
            <person name="Felk A."/>
            <person name="Gacser A."/>
            <person name="Kretschmar M."/>
            <person name="Maehnss B."/>
            <person name="Neuber K."/>
            <person name="Hube B."/>
            <person name="Schaefer W."/>
        </authorList>
    </citation>
    <scope>INDUCTION</scope>
</reference>
<reference key="6">
    <citation type="journal article" date="2005" name="FEMS Microbiol. Lett.">
        <title>Differential Candida albicans lipase gene expression during alimentary tract colonization and infection.</title>
        <authorList>
            <person name="Schofield D.A."/>
            <person name="Westwater C."/>
            <person name="Warner T."/>
            <person name="Balish E."/>
        </authorList>
    </citation>
    <scope>INDUCTION</scope>
</reference>
<gene>
    <name evidence="6" type="primary">LIP9</name>
    <name type="ordered locus">CAALFM_C702880CA</name>
    <name type="ORF">CaO19.12639</name>
    <name type="ORF">CaO19.5172</name>
</gene>
<comment type="function">
    <text evidence="4 8">Secreted lipase that is able to hydrolyze both the neutral triacylglycerols and the monopalmitate ester Tween 40, allowing the use of hydrolyzed products as carbon sources (PubMed:11131027). Has broad lipolytic activity, which may be important for colonization and subsequent infection, therefore contributing to the persistence and virulence in human tissue (Probable).</text>
</comment>
<comment type="catalytic activity">
    <reaction evidence="1">
        <text>a triacylglycerol + H2O = a diacylglycerol + a fatty acid + H(+)</text>
        <dbReference type="Rhea" id="RHEA:12044"/>
        <dbReference type="ChEBI" id="CHEBI:15377"/>
        <dbReference type="ChEBI" id="CHEBI:15378"/>
        <dbReference type="ChEBI" id="CHEBI:17855"/>
        <dbReference type="ChEBI" id="CHEBI:18035"/>
        <dbReference type="ChEBI" id="CHEBI:28868"/>
        <dbReference type="EC" id="3.1.1.3"/>
    </reaction>
    <physiologicalReaction direction="left-to-right" evidence="1">
        <dbReference type="Rhea" id="RHEA:12045"/>
    </physiologicalReaction>
</comment>
<comment type="subcellular location">
    <subcellularLocation>
        <location evidence="4">Secreted</location>
    </subcellularLocation>
</comment>
<comment type="induction">
    <text evidence="4 5">Expression is not induced in medium containing Tween 40 as the sole source of carbon (PubMed:11131027). Expression is up-regulated during the yeast-to-hyphal transition (PubMed:11131027). Expressed during experimental infection of mice (PubMed:11131027). During host infection, expressed in gastric tissues, but not in infected oral tissues (PubMed:15766791).</text>
</comment>
<comment type="similarity">
    <text evidence="7">Belongs to the AB hydrolase superfamily. Lipase family. Class Lip subfamily.</text>
</comment>
<name>LIP9_CANAL</name>
<proteinExistence type="evidence at transcript level"/>
<sequence length="453" mass="49232">MLYLILFLIAPIYAGVLLPTKPSIDPFYNAPEGFKNATVGDILQFRKTPKSITGGFVPLNVQNSWQFLVRSEDSFGNPNVIVTTVIEPVNADPSKIASYQVSENAARADCAPSYALQFGSDVSTLATQAETYLLAPLLDKGYYVVSPDYEGPKSTFTVGKQSGQAVLNSIRASLKSGKITNIAEDAKVLMWGYSGGSLASGWAAALQPDYAPELSRNLLGVALGGFITNVTATVEATDDTIFAGIAANVLGGIANEYPEFKSILQNDTNKSSIFNKINNHCLTDSFIKYVGARFLTGDNKVFKSGWNIFKNLVVSKIVKDNGLVYQKQLIPTIPVFIYHGSMDQISPILNPKKTYQNWCDAGISSIEFAEDLTNGHFTESIVGAPAALTWIIDRFSNKPPVDGCQHVVRTTNYEYPNVSSSILDYFKAAMDVVAQQGLGPNIQKDQLEIKSNL</sequence>
<keyword id="KW-1015">Disulfide bond</keyword>
<keyword id="KW-0325">Glycoprotein</keyword>
<keyword id="KW-0378">Hydrolase</keyword>
<keyword id="KW-0442">Lipid degradation</keyword>
<keyword id="KW-0443">Lipid metabolism</keyword>
<keyword id="KW-1185">Reference proteome</keyword>
<keyword id="KW-0964">Secreted</keyword>
<keyword id="KW-0732">Signal</keyword>
<keyword id="KW-0843">Virulence</keyword>